<dbReference type="EC" id="1.14.14.-" evidence="4 5"/>
<dbReference type="EMBL" id="MK050464">
    <property type="protein sequence ID" value="QCZ35502.1"/>
    <property type="molecule type" value="mRNA"/>
</dbReference>
<dbReference type="SMR" id="P0DO22"/>
<dbReference type="GO" id="GO:0005789">
    <property type="term" value="C:endoplasmic reticulum membrane"/>
    <property type="evidence" value="ECO:0007669"/>
    <property type="project" value="UniProtKB-SubCell"/>
</dbReference>
<dbReference type="GO" id="GO:0020037">
    <property type="term" value="F:heme binding"/>
    <property type="evidence" value="ECO:0007669"/>
    <property type="project" value="InterPro"/>
</dbReference>
<dbReference type="GO" id="GO:0005506">
    <property type="term" value="F:iron ion binding"/>
    <property type="evidence" value="ECO:0007669"/>
    <property type="project" value="InterPro"/>
</dbReference>
<dbReference type="GO" id="GO:0004497">
    <property type="term" value="F:monooxygenase activity"/>
    <property type="evidence" value="ECO:0000314"/>
    <property type="project" value="UniProtKB"/>
</dbReference>
<dbReference type="GO" id="GO:0016705">
    <property type="term" value="F:oxidoreductase activity, acting on paired donors, with incorporation or reduction of molecular oxygen"/>
    <property type="evidence" value="ECO:0007669"/>
    <property type="project" value="InterPro"/>
</dbReference>
<dbReference type="GO" id="GO:0035835">
    <property type="term" value="P:indole alkaloid biosynthetic process"/>
    <property type="evidence" value="ECO:0000314"/>
    <property type="project" value="UniProtKB"/>
</dbReference>
<dbReference type="CDD" id="cd11072">
    <property type="entry name" value="CYP71-like"/>
    <property type="match status" value="1"/>
</dbReference>
<dbReference type="FunFam" id="1.10.630.10:FF:000043">
    <property type="entry name" value="Cytochrome P450 99A2"/>
    <property type="match status" value="1"/>
</dbReference>
<dbReference type="Gene3D" id="1.10.630.10">
    <property type="entry name" value="Cytochrome P450"/>
    <property type="match status" value="1"/>
</dbReference>
<dbReference type="InterPro" id="IPR052306">
    <property type="entry name" value="CYP450_71D"/>
</dbReference>
<dbReference type="InterPro" id="IPR001128">
    <property type="entry name" value="Cyt_P450"/>
</dbReference>
<dbReference type="InterPro" id="IPR017972">
    <property type="entry name" value="Cyt_P450_CS"/>
</dbReference>
<dbReference type="InterPro" id="IPR002401">
    <property type="entry name" value="Cyt_P450_E_grp-I"/>
</dbReference>
<dbReference type="InterPro" id="IPR036396">
    <property type="entry name" value="Cyt_P450_sf"/>
</dbReference>
<dbReference type="PANTHER" id="PTHR47953:SF19">
    <property type="entry name" value="OS06G0641600 PROTEIN"/>
    <property type="match status" value="1"/>
</dbReference>
<dbReference type="PANTHER" id="PTHR47953">
    <property type="entry name" value="OS08G0105600 PROTEIN"/>
    <property type="match status" value="1"/>
</dbReference>
<dbReference type="Pfam" id="PF00067">
    <property type="entry name" value="p450"/>
    <property type="match status" value="1"/>
</dbReference>
<dbReference type="PRINTS" id="PR00463">
    <property type="entry name" value="EP450I"/>
</dbReference>
<dbReference type="PRINTS" id="PR00385">
    <property type="entry name" value="P450"/>
</dbReference>
<dbReference type="SUPFAM" id="SSF48264">
    <property type="entry name" value="Cytochrome P450"/>
    <property type="match status" value="1"/>
</dbReference>
<dbReference type="PROSITE" id="PS00086">
    <property type="entry name" value="CYTOCHROME_P450"/>
    <property type="match status" value="1"/>
</dbReference>
<feature type="chain" id="PRO_0000448556" description="(+)-vincadifformine 19-hydroxylase">
    <location>
        <begin position="1"/>
        <end position="506"/>
    </location>
</feature>
<feature type="topological domain" description="Lumenal" evidence="8">
    <location>
        <begin position="1"/>
        <end position="4"/>
    </location>
</feature>
<feature type="transmembrane region" description="Helical" evidence="3">
    <location>
        <begin position="5"/>
        <end position="25"/>
    </location>
</feature>
<feature type="topological domain" description="Cytoplasmic" evidence="8">
    <location>
        <begin position="26"/>
        <end position="506"/>
    </location>
</feature>
<feature type="binding site" description="axial binding residue" evidence="2">
    <location>
        <position position="450"/>
    </location>
    <ligand>
        <name>heme</name>
        <dbReference type="ChEBI" id="CHEBI:30413"/>
    </ligand>
    <ligandPart>
        <name>Fe</name>
        <dbReference type="ChEBI" id="CHEBI:18248"/>
    </ligandPart>
</feature>
<feature type="mutagenesis site" description="Normal (+)-vincadifformine 19-hydroxylase activity. Acquired tabersonine 3-oxidase (T3O) activity converting (-)-tabersonine to tabersonine 2,3-epoxide in addicition to native (+)-vincadifformine 19-hydroxylase activity; when associated with T-312; P-376 and L-377." evidence="5">
    <original>K</original>
    <variation>R</variation>
    <location>
        <position position="106"/>
    </location>
</feature>
<feature type="mutagenesis site" description="Normal (+)-vincadifformine 19-hydroxylase activity. Acquired tabersonine 3-oxidase (T3O) activity converting (-)-tabersonine to tabersonine 2,3-epoxide in addicition to native (+)-vincadifformine 19-hydroxylase activity; when associated with R-106; P-376 and L-377." evidence="5">
    <original>S</original>
    <variation>T</variation>
    <location>
        <position position="312"/>
    </location>
</feature>
<feature type="mutagenesis site" description="Normal (+)-vincadifformine 19-hydroxylase activity. Normal (+)-vincadifformine 19-hydroxylase activity; when associated with L-377. Acquired tabersonine 3-oxidase (T3O) activity converting (-)-tabersonine to tabersonine 2,3-epoxide in addicition to native (+)-vincadifformine 19-hydroxylase activity; when associated with R-106; T-312 and L-377." evidence="5">
    <original>A</original>
    <variation>P</variation>
    <location>
        <position position="376"/>
    </location>
</feature>
<feature type="mutagenesis site" description="Normal (+)-vincadifformine 19-hydroxylase activity. Normal (+)-vincadifformine 19-hydroxylase activity; when associated with P-376. Acquired tabersonine 3-oxidase (T3O) activity converting (-)-tabersonine to tabersonine 2,3-epoxide in addicition to native (+)-vincadifformine 19-hydroxylase activity; when associated with R-106; T-312 and P-376." evidence="5">
    <original>F</original>
    <variation>L</variation>
    <location>
        <position position="377"/>
    </location>
</feature>
<evidence type="ECO:0000250" key="1">
    <source>
        <dbReference type="UniProtKB" id="I1TEM1"/>
    </source>
</evidence>
<evidence type="ECO:0000250" key="2">
    <source>
        <dbReference type="UniProtKB" id="Q96242"/>
    </source>
</evidence>
<evidence type="ECO:0000255" key="3"/>
<evidence type="ECO:0000269" key="4">
    <source>
    </source>
</evidence>
<evidence type="ECO:0000269" key="5">
    <source>
    </source>
</evidence>
<evidence type="ECO:0000303" key="6">
    <source>
    </source>
</evidence>
<evidence type="ECO:0000303" key="7">
    <source>
    </source>
</evidence>
<evidence type="ECO:0000305" key="8"/>
<comment type="function">
    <text evidence="4 5">Component of the monoterpenoid indole alkaloids (MIAs, e.g. echitovenine, tabersonine, lochnericine, 19-hydroxytabersonine and horhammericine) biosynthetic pathway; MIAs are used in cancer treatment and other medical applications (PubMed:31009114). Cytochrome P450 catalyzing the hydroxylation of (+)-vincadifformine to (+)-minovincinine (PubMed:31009114, PubMed:35660549).</text>
</comment>
<comment type="catalytic activity">
    <reaction evidence="4 5">
        <text>(+)-vincadifformine + reduced [NADPH--hemoprotein reductase] + O2 = (+)-minovincinine + oxidized [NADPH--hemoprotein reductase] + H2O + H(+)</text>
        <dbReference type="Rhea" id="RHEA:61040"/>
        <dbReference type="Rhea" id="RHEA-COMP:11964"/>
        <dbReference type="Rhea" id="RHEA-COMP:11965"/>
        <dbReference type="ChEBI" id="CHEBI:15377"/>
        <dbReference type="ChEBI" id="CHEBI:15378"/>
        <dbReference type="ChEBI" id="CHEBI:15379"/>
        <dbReference type="ChEBI" id="CHEBI:57618"/>
        <dbReference type="ChEBI" id="CHEBI:58210"/>
        <dbReference type="ChEBI" id="CHEBI:142830"/>
        <dbReference type="ChEBI" id="CHEBI:144371"/>
    </reaction>
    <physiologicalReaction direction="left-to-right" evidence="4 5">
        <dbReference type="Rhea" id="RHEA:61041"/>
    </physiologicalReaction>
</comment>
<comment type="cofactor">
    <cofactor evidence="2">
        <name>heme</name>
        <dbReference type="ChEBI" id="CHEBI:30413"/>
    </cofactor>
</comment>
<comment type="activity regulation">
    <text evidence="5">The enantiomer (-)-vincadifformine acts as a competitive inhibitor.</text>
</comment>
<comment type="biophysicochemical properties">
    <kinetics>
        <KM evidence="4">1.6 uM for (+)-vincadifformine (at pH 7.5 and 30 degrees Celsius)</KM>
        <KM evidence="5">1.4 uM for (+)-vincadifformine</KM>
        <KM evidence="5">5.6 uM for (+)-vincadifformine (in the presence of 3uM (-)-vincadifformine)</KM>
        <Vmax evidence="4">20.0 nmol/min/ng enzyme with (+)-vincadifformine as substrate (at pH 7.5 and 30 degrees Celsius)</Vmax>
        <Vmax evidence="5">23.0 nmol/min/ng enzyme with (+)-vincadifformine as substrate</Vmax>
        <Vmax evidence="5">24.0 nmol/min/ng enzyme with (+)-vincadifformine as substrate (in the presence of 3uM (-)-vincadifformine)</Vmax>
    </kinetics>
</comment>
<comment type="pathway">
    <text evidence="4">Alkaloid biosynthesis.</text>
</comment>
<comment type="subcellular location">
    <subcellularLocation>
        <location evidence="1">Endoplasmic reticulum membrane</location>
        <topology evidence="3">Single-pass membrane protein</topology>
    </subcellularLocation>
</comment>
<comment type="tissue specificity">
    <text evidence="4">Accumulates progressively in roots.</text>
</comment>
<comment type="similarity">
    <text evidence="8">Belongs to the cytochrome P450 family.</text>
</comment>
<protein>
    <recommendedName>
        <fullName evidence="6">(+)-vincadifformine 19-hydroxylase</fullName>
        <ecNumber evidence="4 5">1.14.14.-</ecNumber>
    </recommendedName>
    <alternativeName>
        <fullName evidence="7">Cytochrome P450 71BY3</fullName>
    </alternativeName>
</protein>
<reference key="1">
    <citation type="journal article" date="2019" name="Plant J.">
        <title>The assembly of (+)-vincadifformine- and (-)-tabersonine-derived monoterpenoid indole alkaloids in Catharanthus roseus involves separate branch pathways.</title>
        <authorList>
            <person name="Williams D."/>
            <person name="Qu Y."/>
            <person name="Simionescu R."/>
            <person name="De Luca V."/>
        </authorList>
    </citation>
    <scope>NUCLEOTIDE SEQUENCE [MRNA]</scope>
    <scope>FUNCTION</scope>
    <scope>CATALYTIC ACTIVITY</scope>
    <scope>PATHWAY</scope>
    <scope>BIOPHYSICOCHEMICAL PROPERTIES</scope>
    <scope>TISSUE SPECIFICITY</scope>
</reference>
<reference key="2">
    <citation type="journal article" date="2022" name="Phytochemistry">
        <title>Site directed mutagenesis of Catharanthus roseus (+)-vincadifformine 19-hydroxylase (CYP71BY3) results in two distinct enzymatic functions.</title>
        <authorList>
            <person name="Williams D."/>
            <person name="Brzezinski W."/>
            <person name="Gordon H."/>
            <person name="De Luca V."/>
        </authorList>
    </citation>
    <scope>FUNCTION</scope>
    <scope>MUTAGENESIS OF LYS-106; SER-312; ALA-376 AND PHE-377</scope>
    <scope>CATALYTIC ACTIVITY</scope>
    <scope>ACTIVITY REGULATION</scope>
    <scope>BIOPHYSICOCHEMICAL PROPERTIES</scope>
</reference>
<accession>P0DO22</accession>
<accession>A0A4Y5RUI6</accession>
<sequence>MELDECSPSIFIISFIFIAISIAILRRIRPKKTKALPPGPWKLPLIGNLHQFISRDSLPYKILRDLAQKHGPLMHLQLGEVSAVVASSPEMAKVITRTKDLEFADKPAIRAIRIVTYDYLDIAFNSYGKYWREMRKIFVQELLTPKRVRSFWSAREDVFSNLVKTINSANGKSINLTKLISSTTNSIINRVALGNVPYEREIFMELIKQLLTAAGGFKLVDLFPSYKIIHVLEGTERKLWKILGKIDKILDKVIDEHRENLLRTGKGSGENGQEDIVDILLKIEDGGELDHDIPFGNNNIKALLFDIISGGSDTSSTTIDWAMSEMMKNPQVMSKAQKEIREAFNGKKKIDENDVQNLKYLKSVIQETLRLHPPAAFLMRQCREECEIGGYHIPVGTKVFINIWAMGRDPEHWPNPESFIPERFENIPYDFTGSEHQLATFPFGSGRRICPGISFGLANVELSLALLLYHFNWQLPDSSTDLDMTEAIGIAARRKYDLHLIPTSYM</sequence>
<proteinExistence type="evidence at protein level"/>
<gene>
    <name evidence="6" type="primary">V19H</name>
    <name evidence="7" type="synonym">CYP71BY3</name>
</gene>
<keyword id="KW-0017">Alkaloid metabolism</keyword>
<keyword id="KW-0256">Endoplasmic reticulum</keyword>
<keyword id="KW-0349">Heme</keyword>
<keyword id="KW-0408">Iron</keyword>
<keyword id="KW-0472">Membrane</keyword>
<keyword id="KW-0479">Metal-binding</keyword>
<keyword id="KW-0503">Monooxygenase</keyword>
<keyword id="KW-0560">Oxidoreductase</keyword>
<keyword id="KW-0812">Transmembrane</keyword>
<keyword id="KW-1133">Transmembrane helix</keyword>
<name>V19H_CATRO</name>
<organism>
    <name type="scientific">Catharanthus roseus</name>
    <name type="common">Madagascar periwinkle</name>
    <name type="synonym">Vinca rosea</name>
    <dbReference type="NCBI Taxonomy" id="4058"/>
    <lineage>
        <taxon>Eukaryota</taxon>
        <taxon>Viridiplantae</taxon>
        <taxon>Streptophyta</taxon>
        <taxon>Embryophyta</taxon>
        <taxon>Tracheophyta</taxon>
        <taxon>Spermatophyta</taxon>
        <taxon>Magnoliopsida</taxon>
        <taxon>eudicotyledons</taxon>
        <taxon>Gunneridae</taxon>
        <taxon>Pentapetalae</taxon>
        <taxon>asterids</taxon>
        <taxon>lamiids</taxon>
        <taxon>Gentianales</taxon>
        <taxon>Apocynaceae</taxon>
        <taxon>Rauvolfioideae</taxon>
        <taxon>Vinceae</taxon>
        <taxon>Catharanthinae</taxon>
        <taxon>Catharanthus</taxon>
    </lineage>
</organism>